<reference key="1">
    <citation type="journal article" date="2002" name="Proc. Natl. Acad. Sci. U.S.A.">
        <title>Complete genome sequence of Clostridium perfringens, an anaerobic flesh-eater.</title>
        <authorList>
            <person name="Shimizu T."/>
            <person name="Ohtani K."/>
            <person name="Hirakawa H."/>
            <person name="Ohshima K."/>
            <person name="Yamashita A."/>
            <person name="Shiba T."/>
            <person name="Ogasawara N."/>
            <person name="Hattori M."/>
            <person name="Kuhara S."/>
            <person name="Hayashi H."/>
        </authorList>
    </citation>
    <scope>NUCLEOTIDE SEQUENCE [LARGE SCALE GENOMIC DNA]</scope>
    <source>
        <strain>13 / Type A</strain>
    </source>
</reference>
<protein>
    <recommendedName>
        <fullName evidence="1">Glutamate--tRNA ligase</fullName>
        <ecNumber evidence="1">6.1.1.17</ecNumber>
    </recommendedName>
    <alternativeName>
        <fullName evidence="1">Glutamyl-tRNA synthetase</fullName>
        <shortName evidence="1">GluRS</shortName>
    </alternativeName>
</protein>
<dbReference type="EC" id="6.1.1.17" evidence="1"/>
<dbReference type="EMBL" id="BA000016">
    <property type="protein sequence ID" value="BAB80704.1"/>
    <property type="molecule type" value="Genomic_DNA"/>
</dbReference>
<dbReference type="RefSeq" id="WP_011010162.1">
    <property type="nucleotide sequence ID" value="NC_003366.1"/>
</dbReference>
<dbReference type="SMR" id="Q8XLP3"/>
<dbReference type="STRING" id="195102.gene:10490261"/>
<dbReference type="KEGG" id="cpe:CPE0998"/>
<dbReference type="HOGENOM" id="CLU_015768_6_3_9"/>
<dbReference type="Proteomes" id="UP000000818">
    <property type="component" value="Chromosome"/>
</dbReference>
<dbReference type="GO" id="GO:0005829">
    <property type="term" value="C:cytosol"/>
    <property type="evidence" value="ECO:0007669"/>
    <property type="project" value="TreeGrafter"/>
</dbReference>
<dbReference type="GO" id="GO:0005524">
    <property type="term" value="F:ATP binding"/>
    <property type="evidence" value="ECO:0007669"/>
    <property type="project" value="UniProtKB-UniRule"/>
</dbReference>
<dbReference type="GO" id="GO:0004818">
    <property type="term" value="F:glutamate-tRNA ligase activity"/>
    <property type="evidence" value="ECO:0007669"/>
    <property type="project" value="UniProtKB-UniRule"/>
</dbReference>
<dbReference type="GO" id="GO:0000049">
    <property type="term" value="F:tRNA binding"/>
    <property type="evidence" value="ECO:0007669"/>
    <property type="project" value="InterPro"/>
</dbReference>
<dbReference type="GO" id="GO:0008270">
    <property type="term" value="F:zinc ion binding"/>
    <property type="evidence" value="ECO:0007669"/>
    <property type="project" value="InterPro"/>
</dbReference>
<dbReference type="GO" id="GO:0006424">
    <property type="term" value="P:glutamyl-tRNA aminoacylation"/>
    <property type="evidence" value="ECO:0007669"/>
    <property type="project" value="UniProtKB-UniRule"/>
</dbReference>
<dbReference type="CDD" id="cd00808">
    <property type="entry name" value="GluRS_core"/>
    <property type="match status" value="1"/>
</dbReference>
<dbReference type="Gene3D" id="1.10.10.350">
    <property type="match status" value="1"/>
</dbReference>
<dbReference type="Gene3D" id="3.40.50.620">
    <property type="entry name" value="HUPs"/>
    <property type="match status" value="1"/>
</dbReference>
<dbReference type="HAMAP" id="MF_00022">
    <property type="entry name" value="Glu_tRNA_synth_type1"/>
    <property type="match status" value="1"/>
</dbReference>
<dbReference type="InterPro" id="IPR045462">
    <property type="entry name" value="aa-tRNA-synth_I_cd-bd"/>
</dbReference>
<dbReference type="InterPro" id="IPR020751">
    <property type="entry name" value="aa-tRNA-synth_I_codon-bd_sub2"/>
</dbReference>
<dbReference type="InterPro" id="IPR008925">
    <property type="entry name" value="aa_tRNA-synth_I_cd-bd_sf"/>
</dbReference>
<dbReference type="InterPro" id="IPR004527">
    <property type="entry name" value="Glu-tRNA-ligase_bac/mito"/>
</dbReference>
<dbReference type="InterPro" id="IPR000924">
    <property type="entry name" value="Glu/Gln-tRNA-synth"/>
</dbReference>
<dbReference type="InterPro" id="IPR020058">
    <property type="entry name" value="Glu/Gln-tRNA-synth_Ib_cat-dom"/>
</dbReference>
<dbReference type="InterPro" id="IPR049940">
    <property type="entry name" value="GluQ/Sye"/>
</dbReference>
<dbReference type="InterPro" id="IPR033910">
    <property type="entry name" value="GluRS_core"/>
</dbReference>
<dbReference type="InterPro" id="IPR014729">
    <property type="entry name" value="Rossmann-like_a/b/a_fold"/>
</dbReference>
<dbReference type="NCBIfam" id="TIGR00464">
    <property type="entry name" value="gltX_bact"/>
    <property type="match status" value="1"/>
</dbReference>
<dbReference type="PANTHER" id="PTHR43311">
    <property type="entry name" value="GLUTAMATE--TRNA LIGASE"/>
    <property type="match status" value="1"/>
</dbReference>
<dbReference type="PANTHER" id="PTHR43311:SF2">
    <property type="entry name" value="GLUTAMATE--TRNA LIGASE, MITOCHONDRIAL-RELATED"/>
    <property type="match status" value="1"/>
</dbReference>
<dbReference type="Pfam" id="PF19269">
    <property type="entry name" value="Anticodon_2"/>
    <property type="match status" value="1"/>
</dbReference>
<dbReference type="Pfam" id="PF00749">
    <property type="entry name" value="tRNA-synt_1c"/>
    <property type="match status" value="1"/>
</dbReference>
<dbReference type="PRINTS" id="PR00987">
    <property type="entry name" value="TRNASYNTHGLU"/>
</dbReference>
<dbReference type="SUPFAM" id="SSF48163">
    <property type="entry name" value="An anticodon-binding domain of class I aminoacyl-tRNA synthetases"/>
    <property type="match status" value="1"/>
</dbReference>
<dbReference type="SUPFAM" id="SSF52374">
    <property type="entry name" value="Nucleotidylyl transferase"/>
    <property type="match status" value="1"/>
</dbReference>
<name>SYE_CLOPE</name>
<accession>Q8XLP3</accession>
<sequence length="546" mass="62999">MSYENLANLIFPNIDKTPEYYFEKYPKRDLKEGAKVLRYAPSPTGFQHIGGVFASLINERLAHQSGGIFYLRIEDTDQKREVEGAIDDTIKTMHNFGMDFDEGITGENSEKGAYAPYKQSQRADIYRAFVKDLLRKGLAYPCFMTSEELEALREKQIAEKLTPGCYGEFAKYRDLSPEEAIKRIEAGESYVIRMKSPGNPEKRVVAHDMIKGEVSFPENLQDVVIIKGDGLPTYHFAHAIDDTLMRTTHVIRGEEWLSSLPIHLQMFEVLGVEAPKYAHIPTIMKMDGSSKRKLSKRKDPESAVSYYSEKGYPSQSVIEYLLNIINSAFEEWRAENPDADYHDYKVELDKMSKSGALFDLVKLNDVSKDVICKMKPEVVYDLYTNWAKEYDKEMYDLVTSKEAMMKEVFNIDKEGPKPRKDFAKWDEVREKIFYFFDELFDKETANDVELPKTLELEEAKRIIEAYEKAYNFNTDKDTWFSDLKEVAVELGYATDRKKYKKNPEEYKGMVSDVAGAVRAALTHRANTPDLYTIMQIMGEEAVRERI</sequence>
<gene>
    <name evidence="1" type="primary">gltX</name>
    <name type="ordered locus">CPE0998</name>
</gene>
<evidence type="ECO:0000255" key="1">
    <source>
        <dbReference type="HAMAP-Rule" id="MF_00022"/>
    </source>
</evidence>
<organism>
    <name type="scientific">Clostridium perfringens (strain 13 / Type A)</name>
    <dbReference type="NCBI Taxonomy" id="195102"/>
    <lineage>
        <taxon>Bacteria</taxon>
        <taxon>Bacillati</taxon>
        <taxon>Bacillota</taxon>
        <taxon>Clostridia</taxon>
        <taxon>Eubacteriales</taxon>
        <taxon>Clostridiaceae</taxon>
        <taxon>Clostridium</taxon>
    </lineage>
</organism>
<comment type="function">
    <text evidence="1">Catalyzes the attachment of glutamate to tRNA(Glu) in a two-step reaction: glutamate is first activated by ATP to form Glu-AMP and then transferred to the acceptor end of tRNA(Glu).</text>
</comment>
<comment type="catalytic activity">
    <reaction evidence="1">
        <text>tRNA(Glu) + L-glutamate + ATP = L-glutamyl-tRNA(Glu) + AMP + diphosphate</text>
        <dbReference type="Rhea" id="RHEA:23540"/>
        <dbReference type="Rhea" id="RHEA-COMP:9663"/>
        <dbReference type="Rhea" id="RHEA-COMP:9680"/>
        <dbReference type="ChEBI" id="CHEBI:29985"/>
        <dbReference type="ChEBI" id="CHEBI:30616"/>
        <dbReference type="ChEBI" id="CHEBI:33019"/>
        <dbReference type="ChEBI" id="CHEBI:78442"/>
        <dbReference type="ChEBI" id="CHEBI:78520"/>
        <dbReference type="ChEBI" id="CHEBI:456215"/>
        <dbReference type="EC" id="6.1.1.17"/>
    </reaction>
</comment>
<comment type="subunit">
    <text evidence="1">Monomer.</text>
</comment>
<comment type="subcellular location">
    <subcellularLocation>
        <location evidence="1">Cytoplasm</location>
    </subcellularLocation>
</comment>
<comment type="similarity">
    <text evidence="1">Belongs to the class-I aminoacyl-tRNA synthetase family. Glutamate--tRNA ligase type 1 subfamily.</text>
</comment>
<keyword id="KW-0030">Aminoacyl-tRNA synthetase</keyword>
<keyword id="KW-0067">ATP-binding</keyword>
<keyword id="KW-0963">Cytoplasm</keyword>
<keyword id="KW-0436">Ligase</keyword>
<keyword id="KW-0547">Nucleotide-binding</keyword>
<keyword id="KW-0648">Protein biosynthesis</keyword>
<keyword id="KW-1185">Reference proteome</keyword>
<feature type="chain" id="PRO_0000119545" description="Glutamate--tRNA ligase">
    <location>
        <begin position="1"/>
        <end position="546"/>
    </location>
</feature>
<feature type="short sequence motif" description="'HIGH' region" evidence="1">
    <location>
        <begin position="41"/>
        <end position="51"/>
    </location>
</feature>
<feature type="short sequence motif" description="'KMSKS' region" evidence="1">
    <location>
        <begin position="293"/>
        <end position="297"/>
    </location>
</feature>
<feature type="binding site" evidence="1">
    <location>
        <position position="296"/>
    </location>
    <ligand>
        <name>ATP</name>
        <dbReference type="ChEBI" id="CHEBI:30616"/>
    </ligand>
</feature>
<proteinExistence type="inferred from homology"/>